<dbReference type="EMBL" id="BT021507">
    <property type="protein sequence ID" value="AAX46354.1"/>
    <property type="molecule type" value="mRNA"/>
</dbReference>
<dbReference type="RefSeq" id="NP_001029444.1">
    <property type="nucleotide sequence ID" value="NM_001034272.1"/>
</dbReference>
<dbReference type="SMR" id="Q58DU0"/>
<dbReference type="FunCoup" id="Q58DU0">
    <property type="interactions" value="1870"/>
</dbReference>
<dbReference type="STRING" id="9913.ENSBTAP00000056969"/>
<dbReference type="PaxDb" id="9913-ENSBTAP00000027612"/>
<dbReference type="GeneID" id="506656"/>
<dbReference type="KEGG" id="bta:506656"/>
<dbReference type="CTD" id="506656"/>
<dbReference type="eggNOG" id="KOG4520">
    <property type="taxonomic scope" value="Eukaryota"/>
</dbReference>
<dbReference type="HOGENOM" id="CLU_061193_0_1_1"/>
<dbReference type="InParanoid" id="Q58DU0"/>
<dbReference type="OrthoDB" id="5390672at2759"/>
<dbReference type="TreeFam" id="TF332234"/>
<dbReference type="Proteomes" id="UP000009136">
    <property type="component" value="Unplaced"/>
</dbReference>
<dbReference type="InterPro" id="IPR019315">
    <property type="entry name" value="MMTA2_N"/>
</dbReference>
<dbReference type="InterPro" id="IPR039207">
    <property type="entry name" value="MMTAG2-like"/>
</dbReference>
<dbReference type="PANTHER" id="PTHR14580:SF0">
    <property type="entry name" value="MULTIPLE MYELOMA TUMOR-ASSOCIATED PROTEIN 2"/>
    <property type="match status" value="1"/>
</dbReference>
<dbReference type="PANTHER" id="PTHR14580">
    <property type="entry name" value="MULTIPLE MYELOMA TUMOR-ASSOCIATED PROTEIN 2 FAMILY MEMBER"/>
    <property type="match status" value="1"/>
</dbReference>
<dbReference type="Pfam" id="PF10159">
    <property type="entry name" value="MMtag"/>
    <property type="match status" value="1"/>
</dbReference>
<sequence length="235" mass="26211">MFGSSRGGVRGGQDQFSWEDVKTDKQRENYLGNSLMAPVGRWQKGRDLTWYAKGRANSAGLSREQELAAVRQAEQEALMAALGYKNVKKQPTGLSKEDFVEVCKREGGDPEKGVDRLLGLGSSSGSVGRVALSREDKEAAKLGLSVFTHHRVESSRPGTSLALAKKKLRSEEKVEPGPESHRKSRKEKKKKRHKKEKRKKEKDRGRRLDSSLAPAPIQHDSDSSTCCKKRRHDSD</sequence>
<feature type="chain" id="PRO_0000096517" description="Multiple myeloma tumor-associated protein 2 homolog">
    <location>
        <begin position="1"/>
        <end position="235"/>
    </location>
</feature>
<feature type="region of interest" description="Disordered" evidence="2">
    <location>
        <begin position="1"/>
        <end position="21"/>
    </location>
</feature>
<feature type="region of interest" description="Disordered" evidence="2">
    <location>
        <begin position="106"/>
        <end position="129"/>
    </location>
</feature>
<feature type="region of interest" description="Disordered" evidence="2">
    <location>
        <begin position="147"/>
        <end position="235"/>
    </location>
</feature>
<feature type="compositionally biased region" description="Gly residues" evidence="2">
    <location>
        <begin position="1"/>
        <end position="11"/>
    </location>
</feature>
<feature type="compositionally biased region" description="Basic and acidic residues" evidence="2">
    <location>
        <begin position="106"/>
        <end position="115"/>
    </location>
</feature>
<feature type="compositionally biased region" description="Low complexity" evidence="2">
    <location>
        <begin position="116"/>
        <end position="129"/>
    </location>
</feature>
<feature type="compositionally biased region" description="Basic and acidic residues" evidence="2">
    <location>
        <begin position="169"/>
        <end position="181"/>
    </location>
</feature>
<feature type="compositionally biased region" description="Basic residues" evidence="2">
    <location>
        <begin position="182"/>
        <end position="201"/>
    </location>
</feature>
<feature type="modified residue" description="Phosphoserine" evidence="1">
    <location>
        <position position="122"/>
    </location>
</feature>
<feature type="modified residue" description="Phosphoserine" evidence="1">
    <location>
        <position position="126"/>
    </location>
</feature>
<feature type="cross-link" description="Glycyl lysine isopeptide (Lys-Gly) (interchain with G-Cter in SUMO2)" evidence="1">
    <location>
        <position position="22"/>
    </location>
</feature>
<feature type="cross-link" description="Glycyl lysine isopeptide (Lys-Gly) (interchain with G-Cter in SUMO2)" evidence="1">
    <location>
        <position position="104"/>
    </location>
</feature>
<feature type="cross-link" description="Glycyl lysine isopeptide (Lys-Gly) (interchain with G-Cter in SUMO2)" evidence="1">
    <location>
        <position position="112"/>
    </location>
</feature>
<organism>
    <name type="scientific">Bos taurus</name>
    <name type="common">Bovine</name>
    <dbReference type="NCBI Taxonomy" id="9913"/>
    <lineage>
        <taxon>Eukaryota</taxon>
        <taxon>Metazoa</taxon>
        <taxon>Chordata</taxon>
        <taxon>Craniata</taxon>
        <taxon>Vertebrata</taxon>
        <taxon>Euteleostomi</taxon>
        <taxon>Mammalia</taxon>
        <taxon>Eutheria</taxon>
        <taxon>Laurasiatheria</taxon>
        <taxon>Artiodactyla</taxon>
        <taxon>Ruminantia</taxon>
        <taxon>Pecora</taxon>
        <taxon>Bovidae</taxon>
        <taxon>Bovinae</taxon>
        <taxon>Bos</taxon>
    </lineage>
</organism>
<accession>Q58DU0</accession>
<proteinExistence type="evidence at transcript level"/>
<evidence type="ECO:0000250" key="1">
    <source>
        <dbReference type="UniProtKB" id="Q9BU76"/>
    </source>
</evidence>
<evidence type="ECO:0000256" key="2">
    <source>
        <dbReference type="SAM" id="MobiDB-lite"/>
    </source>
</evidence>
<protein>
    <recommendedName>
        <fullName>Multiple myeloma tumor-associated protein 2 homolog</fullName>
    </recommendedName>
</protein>
<keyword id="KW-1017">Isopeptide bond</keyword>
<keyword id="KW-0597">Phosphoprotein</keyword>
<keyword id="KW-1185">Reference proteome</keyword>
<keyword id="KW-0832">Ubl conjugation</keyword>
<gene>
    <name type="primary">MMTAG2</name>
</gene>
<reference key="1">
    <citation type="journal article" date="2005" name="BMC Genomics">
        <title>Characterization of 954 bovine full-CDS cDNA sequences.</title>
        <authorList>
            <person name="Harhay G.P."/>
            <person name="Sonstegard T.S."/>
            <person name="Keele J.W."/>
            <person name="Heaton M.P."/>
            <person name="Clawson M.L."/>
            <person name="Snelling W.M."/>
            <person name="Wiedmann R.T."/>
            <person name="Van Tassell C.P."/>
            <person name="Smith T.P.L."/>
        </authorList>
    </citation>
    <scope>NUCLEOTIDE SEQUENCE [LARGE SCALE MRNA]</scope>
</reference>
<name>MMTA2_BOVIN</name>